<organism>
    <name type="scientific">Oryza sativa subsp. japonica</name>
    <name type="common">Rice</name>
    <dbReference type="NCBI Taxonomy" id="39947"/>
    <lineage>
        <taxon>Eukaryota</taxon>
        <taxon>Viridiplantae</taxon>
        <taxon>Streptophyta</taxon>
        <taxon>Embryophyta</taxon>
        <taxon>Tracheophyta</taxon>
        <taxon>Spermatophyta</taxon>
        <taxon>Magnoliopsida</taxon>
        <taxon>Liliopsida</taxon>
        <taxon>Poales</taxon>
        <taxon>Poaceae</taxon>
        <taxon>BOP clade</taxon>
        <taxon>Oryzoideae</taxon>
        <taxon>Oryzeae</taxon>
        <taxon>Oryzinae</taxon>
        <taxon>Oryza</taxon>
        <taxon>Oryza sativa</taxon>
    </lineage>
</organism>
<comment type="catalytic activity">
    <reaction>
        <text>an aldehyde + O2 + H2O = a carboxylate + H2O2 + H(+)</text>
        <dbReference type="Rhea" id="RHEA:16829"/>
        <dbReference type="ChEBI" id="CHEBI:15377"/>
        <dbReference type="ChEBI" id="CHEBI:15378"/>
        <dbReference type="ChEBI" id="CHEBI:15379"/>
        <dbReference type="ChEBI" id="CHEBI:16240"/>
        <dbReference type="ChEBI" id="CHEBI:17478"/>
        <dbReference type="ChEBI" id="CHEBI:29067"/>
        <dbReference type="EC" id="1.2.3.1"/>
    </reaction>
</comment>
<comment type="cofactor">
    <cofactor evidence="1">
        <name>[2Fe-2S] cluster</name>
        <dbReference type="ChEBI" id="CHEBI:190135"/>
    </cofactor>
    <text evidence="1">Binds 2 [2Fe-2S] clusters.</text>
</comment>
<comment type="cofactor">
    <cofactor evidence="1">
        <name>FAD</name>
        <dbReference type="ChEBI" id="CHEBI:57692"/>
    </cofactor>
</comment>
<comment type="cofactor">
    <cofactor evidence="1">
        <name>Mo-molybdopterin</name>
        <dbReference type="ChEBI" id="CHEBI:71302"/>
    </cofactor>
    <text evidence="1">Binds 1 Mo-molybdopterin (Mo-MPT) cofactor per subunit.</text>
</comment>
<comment type="subunit">
    <text evidence="1">Aldehyde oxidases (AO) are homodimers and heterodimers of AO subunits.</text>
</comment>
<comment type="similarity">
    <text evidence="5">Belongs to the xanthine dehydrogenase family.</text>
</comment>
<comment type="sequence caution" evidence="5">
    <conflict type="erroneous gene model prediction">
        <sequence resource="EMBL-CDS" id="BAF26047"/>
    </conflict>
</comment>
<evidence type="ECO:0000250" key="1"/>
<evidence type="ECO:0000255" key="2">
    <source>
        <dbReference type="PROSITE-ProRule" id="PRU00465"/>
    </source>
</evidence>
<evidence type="ECO:0000255" key="3">
    <source>
        <dbReference type="PROSITE-ProRule" id="PRU00718"/>
    </source>
</evidence>
<evidence type="ECO:0000256" key="4">
    <source>
        <dbReference type="SAM" id="MobiDB-lite"/>
    </source>
</evidence>
<evidence type="ECO:0000305" key="5"/>
<evidence type="ECO:0000312" key="6">
    <source>
        <dbReference type="EMBL" id="EAZ15246.1"/>
    </source>
</evidence>
<accession>Q7XH05</accession>
<accession>A3C2D3</accession>
<accession>Q0IZ18</accession>
<accession>Q8W2P4</accession>
<keyword id="KW-0001">2Fe-2S</keyword>
<keyword id="KW-0937">Abscisic acid biosynthesis</keyword>
<keyword id="KW-0073">Auxin biosynthesis</keyword>
<keyword id="KW-0274">FAD</keyword>
<keyword id="KW-0285">Flavoprotein</keyword>
<keyword id="KW-0408">Iron</keyword>
<keyword id="KW-0411">Iron-sulfur</keyword>
<keyword id="KW-0479">Metal-binding</keyword>
<keyword id="KW-0500">Molybdenum</keyword>
<keyword id="KW-0520">NAD</keyword>
<keyword id="KW-0560">Oxidoreductase</keyword>
<keyword id="KW-1185">Reference proteome</keyword>
<name>ALDO1_ORYSJ</name>
<sequence length="1358" mass="145453">MGEAAAVVAVNGERYEAVGVDPSMTLLEFLRTRTPFRGPKLGCGEGGCGACAVVVSKYDAAADEVTSFSASSCLTLLGSLHHCAVTTSEGIGNSRDGFHPVQRRLAGFHASQCGFCTPGMCVSIFSALANADRAASAAPPPPPTPPGFSRLTAADAERAVSGNLCRCTGYRPILDACKSFAADVDLEDLGLNSFWKKGERADITKLPAYSCTADVATFPEFLKSEIRSSGGAPAVAVTGDGCWFHPRSIEEFHRLFECNLFDEMSVKIVASNTGSGVYKDQDLHDKYINISQIPELSAINRSSNGIEIGAAVSISKAIEILRSDGGDAVVFRKIAYHLGKVASPFVRNTATIGGNIIMAQRMSFPSDIATVLLAAGSTVTIQQVASKRMCLTLEEFLKQPPCDSRTLLISISIPDWCSYDGITFETFRAAPRPFGNAVSYVNSAFLARSSLDAASGSHLIEDVRLAFGAFGSEHAIRASKVEEFLKGKLVSASVILEAVRLLKGVVSPAEGTTHPEYRVSLAVSYLFRFLSSLANGLDDKPENANNVPNGSCTTNGTTNGSAESTVDSFDLPIKSRQEMVFSDEYKPVGKPIKKVGAELQASGEAVYVDDIPAPKDCLYGAFIYSTHPHAHIKGVNFRSSLASQKVITVITAKDIPTGGENVGSCFPMLGDEALFADPVAEFAGQNIGVVIAETQKYAYMAARQAVIEYNTENLQPPILTVEDAVQHNSYFQVPPFLQPKPIGDFNQAMSEADHKIIDGEVKLGSQYYFYMETQTALAFPDEDNCITVYCSAQMPEVTQDIVARCLGVPFHNVRIITRRVGGGFGGKAMKATHVATACAVAAFKLRRPVRMYLDRKTDMIMAGGRHPMKAKYSVGFKSDGKITALHLDLKINAGISPEFSPAIPYAIVGALKKYSWGALAFDIKVCKTNVSSKSAMRAPGDAQGSFIAEAIVEHVASTLSVATNTIRRKNLHDLESLKVFFGDSAAGEASTSSYSLVIIFDRLASTPEYQRRAAMVEQFNGSSRWKKRGISCVPITYSVTLRPSPGKVSILNDGSIAVEVGGVEIGQGLWTKVKQMTAFALGQLCDDGGEGLLDNVRVIQADTLSMIQGGWTAGSTTSETSCEAVRKSCAALVERLKPIKEKAGTLPWKSFIAQASMASVKLTEHAYWTPDPTFTSYMNYGAATSEVEVDVLTGATTILRSDLVYDCGQSLNPAVDLGQVEGAFVQGVGFFTNEEYATNADGLVIHDGTWTYKIPTVDTIPKQFNVELINTARHHSRVLSSKASGEPPLLLASSVHCAMREAIRAARREFAAVGGGTGGSDQVTSFQMDVPATMPAVKELCGLDVVERYLESFSATTA</sequence>
<protein>
    <recommendedName>
        <fullName>Probable aldehyde oxidase 1</fullName>
        <shortName>AO-1</shortName>
        <ecNumber>1.2.3.1</ecNumber>
    </recommendedName>
</protein>
<gene>
    <name type="ordered locus">Os10g0138100</name>
    <name type="ordered locus">LOC_Os10g04860</name>
    <name evidence="6" type="ORF">OsJ_30665</name>
    <name type="ORF">OSJNAa0087H07.7</name>
</gene>
<proteinExistence type="evidence at transcript level"/>
<reference key="1">
    <citation type="journal article" date="2003" name="Science">
        <title>In-depth view of structure, activity, and evolution of rice chromosome 10.</title>
        <authorList>
            <person name="Yu Y."/>
            <person name="Rambo T."/>
            <person name="Currie J."/>
            <person name="Saski C."/>
            <person name="Kim H.-R."/>
            <person name="Collura K."/>
            <person name="Thompson S."/>
            <person name="Simmons J."/>
            <person name="Yang T.-J."/>
            <person name="Nah G."/>
            <person name="Patel A.J."/>
            <person name="Thurmond S."/>
            <person name="Henry D."/>
            <person name="Oates R."/>
            <person name="Palmer M."/>
            <person name="Pries G."/>
            <person name="Gibson J."/>
            <person name="Anderson H."/>
            <person name="Paradkar M."/>
            <person name="Crane L."/>
            <person name="Dale J."/>
            <person name="Carver M.B."/>
            <person name="Wood T."/>
            <person name="Frisch D."/>
            <person name="Engler F."/>
            <person name="Soderlund C."/>
            <person name="Palmer L.E."/>
            <person name="Teytelman L."/>
            <person name="Nascimento L."/>
            <person name="De la Bastide M."/>
            <person name="Spiegel L."/>
            <person name="Ware D."/>
            <person name="O'Shaughnessy A."/>
            <person name="Dike S."/>
            <person name="Dedhia N."/>
            <person name="Preston R."/>
            <person name="Huang E."/>
            <person name="Ferraro K."/>
            <person name="Kuit K."/>
            <person name="Miller B."/>
            <person name="Zutavern T."/>
            <person name="Katzenberger F."/>
            <person name="Muller S."/>
            <person name="Balija V."/>
            <person name="Martienssen R.A."/>
            <person name="Stein L."/>
            <person name="Minx P."/>
            <person name="Johnson D."/>
            <person name="Cordum H."/>
            <person name="Mardis E."/>
            <person name="Cheng Z."/>
            <person name="Jiang J."/>
            <person name="Wilson R."/>
            <person name="McCombie W.R."/>
            <person name="Wing R.A."/>
            <person name="Yuan Q."/>
            <person name="Ouyang S."/>
            <person name="Liu J."/>
            <person name="Jones K.M."/>
            <person name="Gansberger K."/>
            <person name="Moffat K."/>
            <person name="Hill J."/>
            <person name="Tsitrin T."/>
            <person name="Overton L."/>
            <person name="Bera J."/>
            <person name="Kim M."/>
            <person name="Jin S."/>
            <person name="Tallon L."/>
            <person name="Ciecko A."/>
            <person name="Pai G."/>
            <person name="Van Aken S."/>
            <person name="Utterback T."/>
            <person name="Reidmuller S."/>
            <person name="Bormann J."/>
            <person name="Feldblyum T."/>
            <person name="Hsiao J."/>
            <person name="Zismann V."/>
            <person name="Blunt S."/>
            <person name="de Vazeille A.R."/>
            <person name="Shaffer T."/>
            <person name="Koo H."/>
            <person name="Suh B."/>
            <person name="Yang Q."/>
            <person name="Haas B."/>
            <person name="Peterson J."/>
            <person name="Pertea M."/>
            <person name="Volfovsky N."/>
            <person name="Wortman J."/>
            <person name="White O."/>
            <person name="Salzberg S.L."/>
            <person name="Fraser C.M."/>
            <person name="Buell C.R."/>
            <person name="Messing J."/>
            <person name="Song R."/>
            <person name="Fuks G."/>
            <person name="Llaca V."/>
            <person name="Kovchak S."/>
            <person name="Young S."/>
            <person name="Bowers J.E."/>
            <person name="Paterson A.H."/>
            <person name="Johns M.A."/>
            <person name="Mao L."/>
            <person name="Pan H."/>
            <person name="Dean R.A."/>
        </authorList>
    </citation>
    <scope>NUCLEOTIDE SEQUENCE [LARGE SCALE GENOMIC DNA]</scope>
    <source>
        <strain>cv. Nipponbare</strain>
    </source>
</reference>
<reference key="2">
    <citation type="journal article" date="2005" name="Nature">
        <title>The map-based sequence of the rice genome.</title>
        <authorList>
            <consortium name="International rice genome sequencing project (IRGSP)"/>
        </authorList>
    </citation>
    <scope>NUCLEOTIDE SEQUENCE [LARGE SCALE GENOMIC DNA]</scope>
    <source>
        <strain>cv. Nipponbare</strain>
    </source>
</reference>
<reference key="3">
    <citation type="journal article" date="2008" name="Nucleic Acids Res.">
        <title>The rice annotation project database (RAP-DB): 2008 update.</title>
        <authorList>
            <consortium name="The rice annotation project (RAP)"/>
        </authorList>
    </citation>
    <scope>GENOME REANNOTATION</scope>
    <source>
        <strain>cv. Nipponbare</strain>
    </source>
</reference>
<reference key="4">
    <citation type="journal article" date="2013" name="Rice">
        <title>Improvement of the Oryza sativa Nipponbare reference genome using next generation sequence and optical map data.</title>
        <authorList>
            <person name="Kawahara Y."/>
            <person name="de la Bastide M."/>
            <person name="Hamilton J.P."/>
            <person name="Kanamori H."/>
            <person name="McCombie W.R."/>
            <person name="Ouyang S."/>
            <person name="Schwartz D.C."/>
            <person name="Tanaka T."/>
            <person name="Wu J."/>
            <person name="Zhou S."/>
            <person name="Childs K.L."/>
            <person name="Davidson R.M."/>
            <person name="Lin H."/>
            <person name="Quesada-Ocampo L."/>
            <person name="Vaillancourt B."/>
            <person name="Sakai H."/>
            <person name="Lee S.S."/>
            <person name="Kim J."/>
            <person name="Numa H."/>
            <person name="Itoh T."/>
            <person name="Buell C.R."/>
            <person name="Matsumoto T."/>
        </authorList>
    </citation>
    <scope>GENOME REANNOTATION</scope>
    <source>
        <strain>cv. Nipponbare</strain>
    </source>
</reference>
<reference key="5">
    <citation type="journal article" date="2005" name="PLoS Biol.">
        <title>The genomes of Oryza sativa: a history of duplications.</title>
        <authorList>
            <person name="Yu J."/>
            <person name="Wang J."/>
            <person name="Lin W."/>
            <person name="Li S."/>
            <person name="Li H."/>
            <person name="Zhou J."/>
            <person name="Ni P."/>
            <person name="Dong W."/>
            <person name="Hu S."/>
            <person name="Zeng C."/>
            <person name="Zhang J."/>
            <person name="Zhang Y."/>
            <person name="Li R."/>
            <person name="Xu Z."/>
            <person name="Li S."/>
            <person name="Li X."/>
            <person name="Zheng H."/>
            <person name="Cong L."/>
            <person name="Lin L."/>
            <person name="Yin J."/>
            <person name="Geng J."/>
            <person name="Li G."/>
            <person name="Shi J."/>
            <person name="Liu J."/>
            <person name="Lv H."/>
            <person name="Li J."/>
            <person name="Wang J."/>
            <person name="Deng Y."/>
            <person name="Ran L."/>
            <person name="Shi X."/>
            <person name="Wang X."/>
            <person name="Wu Q."/>
            <person name="Li C."/>
            <person name="Ren X."/>
            <person name="Wang J."/>
            <person name="Wang X."/>
            <person name="Li D."/>
            <person name="Liu D."/>
            <person name="Zhang X."/>
            <person name="Ji Z."/>
            <person name="Zhao W."/>
            <person name="Sun Y."/>
            <person name="Zhang Z."/>
            <person name="Bao J."/>
            <person name="Han Y."/>
            <person name="Dong L."/>
            <person name="Ji J."/>
            <person name="Chen P."/>
            <person name="Wu S."/>
            <person name="Liu J."/>
            <person name="Xiao Y."/>
            <person name="Bu D."/>
            <person name="Tan J."/>
            <person name="Yang L."/>
            <person name="Ye C."/>
            <person name="Zhang J."/>
            <person name="Xu J."/>
            <person name="Zhou Y."/>
            <person name="Yu Y."/>
            <person name="Zhang B."/>
            <person name="Zhuang S."/>
            <person name="Wei H."/>
            <person name="Liu B."/>
            <person name="Lei M."/>
            <person name="Yu H."/>
            <person name="Li Y."/>
            <person name="Xu H."/>
            <person name="Wei S."/>
            <person name="He X."/>
            <person name="Fang L."/>
            <person name="Zhang Z."/>
            <person name="Zhang Y."/>
            <person name="Huang X."/>
            <person name="Su Z."/>
            <person name="Tong W."/>
            <person name="Li J."/>
            <person name="Tong Z."/>
            <person name="Li S."/>
            <person name="Ye J."/>
            <person name="Wang L."/>
            <person name="Fang L."/>
            <person name="Lei T."/>
            <person name="Chen C.-S."/>
            <person name="Chen H.-C."/>
            <person name="Xu Z."/>
            <person name="Li H."/>
            <person name="Huang H."/>
            <person name="Zhang F."/>
            <person name="Xu H."/>
            <person name="Li N."/>
            <person name="Zhao C."/>
            <person name="Li S."/>
            <person name="Dong L."/>
            <person name="Huang Y."/>
            <person name="Li L."/>
            <person name="Xi Y."/>
            <person name="Qi Q."/>
            <person name="Li W."/>
            <person name="Zhang B."/>
            <person name="Hu W."/>
            <person name="Zhang Y."/>
            <person name="Tian X."/>
            <person name="Jiao Y."/>
            <person name="Liang X."/>
            <person name="Jin J."/>
            <person name="Gao L."/>
            <person name="Zheng W."/>
            <person name="Hao B."/>
            <person name="Liu S.-M."/>
            <person name="Wang W."/>
            <person name="Yuan L."/>
            <person name="Cao M."/>
            <person name="McDermott J."/>
            <person name="Samudrala R."/>
            <person name="Wang J."/>
            <person name="Wong G.K.-S."/>
            <person name="Yang H."/>
        </authorList>
    </citation>
    <scope>NUCLEOTIDE SEQUENCE [LARGE SCALE GENOMIC DNA]</scope>
    <source>
        <strain>cv. Nipponbare</strain>
    </source>
</reference>
<reference key="6">
    <citation type="journal article" date="2003" name="Science">
        <title>Collection, mapping, and annotation of over 28,000 cDNA clones from japonica rice.</title>
        <authorList>
            <consortium name="The rice full-length cDNA consortium"/>
        </authorList>
    </citation>
    <scope>NUCLEOTIDE SEQUENCE [LARGE SCALE MRNA]</scope>
    <source>
        <strain>cv. Nipponbare</strain>
    </source>
</reference>
<feature type="chain" id="PRO_0000247645" description="Probable aldehyde oxidase 1">
    <location>
        <begin position="1"/>
        <end position="1358"/>
    </location>
</feature>
<feature type="domain" description="2Fe-2S ferredoxin-type" evidence="2">
    <location>
        <begin position="4"/>
        <end position="91"/>
    </location>
</feature>
<feature type="domain" description="FAD-binding PCMH-type" evidence="3">
    <location>
        <begin position="236"/>
        <end position="418"/>
    </location>
</feature>
<feature type="region of interest" description="Disordered" evidence="4">
    <location>
        <begin position="540"/>
        <end position="567"/>
    </location>
</feature>
<feature type="compositionally biased region" description="Low complexity" evidence="4">
    <location>
        <begin position="549"/>
        <end position="561"/>
    </location>
</feature>
<feature type="binding site" evidence="2">
    <location>
        <position position="43"/>
    </location>
    <ligand>
        <name>[2Fe-2S] cluster</name>
        <dbReference type="ChEBI" id="CHEBI:190135"/>
    </ligand>
</feature>
<feature type="binding site" evidence="2">
    <location>
        <position position="48"/>
    </location>
    <ligand>
        <name>[2Fe-2S] cluster</name>
        <dbReference type="ChEBI" id="CHEBI:190135"/>
    </ligand>
</feature>
<feature type="binding site" evidence="2">
    <location>
        <position position="51"/>
    </location>
    <ligand>
        <name>[2Fe-2S] cluster</name>
        <dbReference type="ChEBI" id="CHEBI:190135"/>
    </ligand>
</feature>
<feature type="binding site" evidence="2">
    <location>
        <position position="73"/>
    </location>
    <ligand>
        <name>[2Fe-2S] cluster</name>
        <dbReference type="ChEBI" id="CHEBI:190135"/>
    </ligand>
</feature>
<feature type="sequence conflict" description="In Ref. 6; AK121557." evidence="5" ref="6">
    <original>F</original>
    <variation>L</variation>
    <location>
        <position position="221"/>
    </location>
</feature>
<feature type="sequence conflict" description="In Ref. 6; AK121557." evidence="5" ref="6">
    <original>D</original>
    <variation>V</variation>
    <location>
        <position position="610"/>
    </location>
</feature>
<feature type="sequence conflict" description="In Ref. 6; AK121557." evidence="5" ref="6">
    <original>E</original>
    <variation>G</variation>
    <location>
        <position position="660"/>
    </location>
</feature>
<feature type="sequence conflict" description="In Ref. 6; AK121557." evidence="5" ref="6">
    <original>H</original>
    <variation>R</variation>
    <location>
        <position position="1296"/>
    </location>
</feature>
<dbReference type="EC" id="1.2.3.1"/>
<dbReference type="EMBL" id="AC099733">
    <property type="protein sequence ID" value="AAL70116.1"/>
    <property type="molecule type" value="Genomic_DNA"/>
</dbReference>
<dbReference type="EMBL" id="DP000086">
    <property type="protein sequence ID" value="AAP52052.1"/>
    <property type="molecule type" value="Genomic_DNA"/>
</dbReference>
<dbReference type="EMBL" id="AP008216">
    <property type="protein sequence ID" value="BAF26047.1"/>
    <property type="status" value="ALT_SEQ"/>
    <property type="molecule type" value="Genomic_DNA"/>
</dbReference>
<dbReference type="EMBL" id="AP014966">
    <property type="protein sequence ID" value="BAT09825.1"/>
    <property type="molecule type" value="Genomic_DNA"/>
</dbReference>
<dbReference type="EMBL" id="CM000147">
    <property type="protein sequence ID" value="EAZ15246.1"/>
    <property type="molecule type" value="Genomic_DNA"/>
</dbReference>
<dbReference type="EMBL" id="AK121557">
    <property type="status" value="NOT_ANNOTATED_CDS"/>
    <property type="molecule type" value="mRNA"/>
</dbReference>
<dbReference type="RefSeq" id="XP_015614946.1">
    <property type="nucleotide sequence ID" value="XM_015759460.1"/>
</dbReference>
<dbReference type="SMR" id="Q7XH05"/>
<dbReference type="FunCoup" id="Q7XH05">
    <property type="interactions" value="6"/>
</dbReference>
<dbReference type="STRING" id="39947.Q7XH05"/>
<dbReference type="PaxDb" id="39947-Q7XH05"/>
<dbReference type="EnsemblPlants" id="Os10t0138100-01">
    <property type="protein sequence ID" value="Os10t0138100-01"/>
    <property type="gene ID" value="Os10g0138100"/>
</dbReference>
<dbReference type="Gramene" id="Os10t0138100-01">
    <property type="protein sequence ID" value="Os10t0138100-01"/>
    <property type="gene ID" value="Os10g0138100"/>
</dbReference>
<dbReference type="KEGG" id="dosa:Os10g0138100"/>
<dbReference type="eggNOG" id="KOG0430">
    <property type="taxonomic scope" value="Eukaryota"/>
</dbReference>
<dbReference type="HOGENOM" id="CLU_001681_1_1_1"/>
<dbReference type="InParanoid" id="Q7XH05"/>
<dbReference type="OMA" id="LTATNCY"/>
<dbReference type="OrthoDB" id="8300278at2759"/>
<dbReference type="PlantReactome" id="R-OSA-1119486">
    <property type="pathway name" value="IAA biosynthesis I"/>
</dbReference>
<dbReference type="Proteomes" id="UP000000763">
    <property type="component" value="Chromosome 10"/>
</dbReference>
<dbReference type="Proteomes" id="UP000007752">
    <property type="component" value="Chromosome 10"/>
</dbReference>
<dbReference type="Proteomes" id="UP000059680">
    <property type="component" value="Chromosome 10"/>
</dbReference>
<dbReference type="ExpressionAtlas" id="Q7XH05">
    <property type="expression patterns" value="baseline and differential"/>
</dbReference>
<dbReference type="GO" id="GO:0051537">
    <property type="term" value="F:2 iron, 2 sulfur cluster binding"/>
    <property type="evidence" value="ECO:0007669"/>
    <property type="project" value="UniProtKB-KW"/>
</dbReference>
<dbReference type="GO" id="GO:0004031">
    <property type="term" value="F:aldehyde oxidase activity"/>
    <property type="evidence" value="ECO:0007669"/>
    <property type="project" value="UniProtKB-EC"/>
</dbReference>
<dbReference type="GO" id="GO:0071949">
    <property type="term" value="F:FAD binding"/>
    <property type="evidence" value="ECO:0007669"/>
    <property type="project" value="InterPro"/>
</dbReference>
<dbReference type="GO" id="GO:0005506">
    <property type="term" value="F:iron ion binding"/>
    <property type="evidence" value="ECO:0007669"/>
    <property type="project" value="InterPro"/>
</dbReference>
<dbReference type="GO" id="GO:0016491">
    <property type="term" value="F:oxidoreductase activity"/>
    <property type="evidence" value="ECO:0000318"/>
    <property type="project" value="GO_Central"/>
</dbReference>
<dbReference type="GO" id="GO:0009688">
    <property type="term" value="P:abscisic acid biosynthetic process"/>
    <property type="evidence" value="ECO:0007669"/>
    <property type="project" value="UniProtKB-KW"/>
</dbReference>
<dbReference type="GO" id="GO:0009851">
    <property type="term" value="P:auxin biosynthetic process"/>
    <property type="evidence" value="ECO:0007669"/>
    <property type="project" value="UniProtKB-KW"/>
</dbReference>
<dbReference type="FunFam" id="1.10.150.120:FF:000006">
    <property type="entry name" value="Aldehyde oxidase"/>
    <property type="match status" value="1"/>
</dbReference>
<dbReference type="FunFam" id="3.30.365.10:FF:000008">
    <property type="entry name" value="Aldehyde oxidase1"/>
    <property type="match status" value="1"/>
</dbReference>
<dbReference type="FunFam" id="3.30.390.50:FF:000003">
    <property type="entry name" value="Aldehyde oxidase1"/>
    <property type="match status" value="1"/>
</dbReference>
<dbReference type="FunFam" id="3.90.1170.50:FF:000007">
    <property type="entry name" value="Aldehyde oxidase1"/>
    <property type="match status" value="1"/>
</dbReference>
<dbReference type="FunFam" id="3.30.365.10:FF:000001">
    <property type="entry name" value="Xanthine dehydrogenase oxidase"/>
    <property type="match status" value="1"/>
</dbReference>
<dbReference type="FunFam" id="3.10.20.30:FF:000012">
    <property type="entry name" value="Xanthine dehydrogenase/oxidase"/>
    <property type="match status" value="1"/>
</dbReference>
<dbReference type="Gene3D" id="3.10.20.30">
    <property type="match status" value="1"/>
</dbReference>
<dbReference type="Gene3D" id="3.30.465.10">
    <property type="match status" value="1"/>
</dbReference>
<dbReference type="Gene3D" id="1.10.150.120">
    <property type="entry name" value="[2Fe-2S]-binding domain"/>
    <property type="match status" value="1"/>
</dbReference>
<dbReference type="Gene3D" id="3.90.1170.50">
    <property type="entry name" value="Aldehyde oxidase/xanthine dehydrogenase, a/b hammerhead"/>
    <property type="match status" value="1"/>
</dbReference>
<dbReference type="Gene3D" id="3.30.365.10">
    <property type="entry name" value="Aldehyde oxidase/xanthine dehydrogenase, molybdopterin binding domain"/>
    <property type="match status" value="4"/>
</dbReference>
<dbReference type="Gene3D" id="3.30.390.50">
    <property type="entry name" value="CO dehydrogenase flavoprotein, C-terminal domain"/>
    <property type="match status" value="1"/>
</dbReference>
<dbReference type="InterPro" id="IPR002888">
    <property type="entry name" value="2Fe-2S-bd"/>
</dbReference>
<dbReference type="InterPro" id="IPR036884">
    <property type="entry name" value="2Fe-2S-bd_dom_sf"/>
</dbReference>
<dbReference type="InterPro" id="IPR036010">
    <property type="entry name" value="2Fe-2S_ferredoxin-like_sf"/>
</dbReference>
<dbReference type="InterPro" id="IPR001041">
    <property type="entry name" value="2Fe-2S_ferredoxin-type"/>
</dbReference>
<dbReference type="InterPro" id="IPR006058">
    <property type="entry name" value="2Fe2S_fd_BS"/>
</dbReference>
<dbReference type="InterPro" id="IPR000674">
    <property type="entry name" value="Ald_Oxase/Xan_DH_a/b"/>
</dbReference>
<dbReference type="InterPro" id="IPR036856">
    <property type="entry name" value="Ald_Oxase/Xan_DH_a/b_sf"/>
</dbReference>
<dbReference type="InterPro" id="IPR016208">
    <property type="entry name" value="Ald_Oxase/xanthine_DH-like"/>
</dbReference>
<dbReference type="InterPro" id="IPR008274">
    <property type="entry name" value="AldOxase/xan_DH_MoCoBD1"/>
</dbReference>
<dbReference type="InterPro" id="IPR046867">
    <property type="entry name" value="AldOxase/xan_DH_MoCoBD2"/>
</dbReference>
<dbReference type="InterPro" id="IPR037165">
    <property type="entry name" value="AldOxase/xan_DH_Mopterin-bd_sf"/>
</dbReference>
<dbReference type="InterPro" id="IPR012675">
    <property type="entry name" value="Beta-grasp_dom_sf"/>
</dbReference>
<dbReference type="InterPro" id="IPR005107">
    <property type="entry name" value="CO_DH_flav_C"/>
</dbReference>
<dbReference type="InterPro" id="IPR036683">
    <property type="entry name" value="CO_DH_flav_C_dom_sf"/>
</dbReference>
<dbReference type="InterPro" id="IPR016166">
    <property type="entry name" value="FAD-bd_PCMH"/>
</dbReference>
<dbReference type="InterPro" id="IPR036318">
    <property type="entry name" value="FAD-bd_PCMH-like_sf"/>
</dbReference>
<dbReference type="InterPro" id="IPR016169">
    <property type="entry name" value="FAD-bd_PCMH_sub2"/>
</dbReference>
<dbReference type="InterPro" id="IPR002346">
    <property type="entry name" value="Mopterin_DH_FAD-bd"/>
</dbReference>
<dbReference type="PANTHER" id="PTHR11908:SF92">
    <property type="entry name" value="ALDEHYDE OXIDASE 1-RELATED"/>
    <property type="match status" value="1"/>
</dbReference>
<dbReference type="PANTHER" id="PTHR11908">
    <property type="entry name" value="XANTHINE DEHYDROGENASE"/>
    <property type="match status" value="1"/>
</dbReference>
<dbReference type="Pfam" id="PF01315">
    <property type="entry name" value="Ald_Xan_dh_C"/>
    <property type="match status" value="1"/>
</dbReference>
<dbReference type="Pfam" id="PF03450">
    <property type="entry name" value="CO_deh_flav_C"/>
    <property type="match status" value="1"/>
</dbReference>
<dbReference type="Pfam" id="PF00941">
    <property type="entry name" value="FAD_binding_5"/>
    <property type="match status" value="1"/>
</dbReference>
<dbReference type="Pfam" id="PF00111">
    <property type="entry name" value="Fer2"/>
    <property type="match status" value="1"/>
</dbReference>
<dbReference type="Pfam" id="PF01799">
    <property type="entry name" value="Fer2_2"/>
    <property type="match status" value="1"/>
</dbReference>
<dbReference type="Pfam" id="PF02738">
    <property type="entry name" value="MoCoBD_1"/>
    <property type="match status" value="1"/>
</dbReference>
<dbReference type="Pfam" id="PF20256">
    <property type="entry name" value="MoCoBD_2"/>
    <property type="match status" value="1"/>
</dbReference>
<dbReference type="PIRSF" id="PIRSF000127">
    <property type="entry name" value="Xanthine_DH"/>
    <property type="match status" value="1"/>
</dbReference>
<dbReference type="SMART" id="SM01008">
    <property type="entry name" value="Ald_Xan_dh_C"/>
    <property type="match status" value="1"/>
</dbReference>
<dbReference type="SMART" id="SM01092">
    <property type="entry name" value="CO_deh_flav_C"/>
    <property type="match status" value="1"/>
</dbReference>
<dbReference type="SUPFAM" id="SSF54292">
    <property type="entry name" value="2Fe-2S ferredoxin-like"/>
    <property type="match status" value="1"/>
</dbReference>
<dbReference type="SUPFAM" id="SSF55447">
    <property type="entry name" value="CO dehydrogenase flavoprotein C-terminal domain-like"/>
    <property type="match status" value="1"/>
</dbReference>
<dbReference type="SUPFAM" id="SSF47741">
    <property type="entry name" value="CO dehydrogenase ISP C-domain like"/>
    <property type="match status" value="1"/>
</dbReference>
<dbReference type="SUPFAM" id="SSF54665">
    <property type="entry name" value="CO dehydrogenase molybdoprotein N-domain-like"/>
    <property type="match status" value="1"/>
</dbReference>
<dbReference type="SUPFAM" id="SSF56176">
    <property type="entry name" value="FAD-binding/transporter-associated domain-like"/>
    <property type="match status" value="1"/>
</dbReference>
<dbReference type="SUPFAM" id="SSF56003">
    <property type="entry name" value="Molybdenum cofactor-binding domain"/>
    <property type="match status" value="1"/>
</dbReference>
<dbReference type="PROSITE" id="PS00197">
    <property type="entry name" value="2FE2S_FER_1"/>
    <property type="match status" value="1"/>
</dbReference>
<dbReference type="PROSITE" id="PS51085">
    <property type="entry name" value="2FE2S_FER_2"/>
    <property type="match status" value="1"/>
</dbReference>
<dbReference type="PROSITE" id="PS51387">
    <property type="entry name" value="FAD_PCMH"/>
    <property type="match status" value="1"/>
</dbReference>